<proteinExistence type="inferred from homology"/>
<reference key="1">
    <citation type="submission" date="2008-10" db="EMBL/GenBank/DDBJ databases">
        <title>Genome sequence of Ureaplasma urealyticum serovar 10 ATCC-33699.</title>
        <authorList>
            <person name="Shrivastava S."/>
            <person name="Methe B.A."/>
            <person name="Glass J."/>
            <person name="White K."/>
            <person name="Duffy L.B."/>
        </authorList>
    </citation>
    <scope>NUCLEOTIDE SEQUENCE [LARGE SCALE GENOMIC DNA]</scope>
    <source>
        <strain>ATCC 33699 / Western</strain>
    </source>
</reference>
<dbReference type="EMBL" id="CP001184">
    <property type="protein sequence ID" value="ACI59949.1"/>
    <property type="molecule type" value="Genomic_DNA"/>
</dbReference>
<dbReference type="RefSeq" id="WP_004025884.1">
    <property type="nucleotide sequence ID" value="NC_011374.1"/>
</dbReference>
<dbReference type="SMR" id="B5ZAW6"/>
<dbReference type="STRING" id="565575.UUR10_0149"/>
<dbReference type="GeneID" id="93848632"/>
<dbReference type="KEGG" id="uue:UUR10_0149"/>
<dbReference type="eggNOG" id="COG0712">
    <property type="taxonomic scope" value="Bacteria"/>
</dbReference>
<dbReference type="HOGENOM" id="CLU_085114_1_1_14"/>
<dbReference type="OrthoDB" id="400380at2"/>
<dbReference type="Proteomes" id="UP000002018">
    <property type="component" value="Chromosome"/>
</dbReference>
<dbReference type="GO" id="GO:0005886">
    <property type="term" value="C:plasma membrane"/>
    <property type="evidence" value="ECO:0007669"/>
    <property type="project" value="UniProtKB-SubCell"/>
</dbReference>
<dbReference type="GO" id="GO:0045259">
    <property type="term" value="C:proton-transporting ATP synthase complex"/>
    <property type="evidence" value="ECO:0007669"/>
    <property type="project" value="UniProtKB-KW"/>
</dbReference>
<dbReference type="GO" id="GO:0046933">
    <property type="term" value="F:proton-transporting ATP synthase activity, rotational mechanism"/>
    <property type="evidence" value="ECO:0007669"/>
    <property type="project" value="UniProtKB-UniRule"/>
</dbReference>
<dbReference type="Gene3D" id="1.10.520.20">
    <property type="entry name" value="N-terminal domain of the delta subunit of the F1F0-ATP synthase"/>
    <property type="match status" value="1"/>
</dbReference>
<dbReference type="HAMAP" id="MF_01416">
    <property type="entry name" value="ATP_synth_delta_bact"/>
    <property type="match status" value="1"/>
</dbReference>
<dbReference type="InterPro" id="IPR026015">
    <property type="entry name" value="ATP_synth_OSCP/delta_N_sf"/>
</dbReference>
<dbReference type="InterPro" id="IPR000711">
    <property type="entry name" value="ATPase_OSCP/dsu"/>
</dbReference>
<dbReference type="NCBIfam" id="TIGR01145">
    <property type="entry name" value="ATP_synt_delta"/>
    <property type="match status" value="1"/>
</dbReference>
<dbReference type="PANTHER" id="PTHR11910">
    <property type="entry name" value="ATP SYNTHASE DELTA CHAIN"/>
    <property type="match status" value="1"/>
</dbReference>
<dbReference type="Pfam" id="PF00213">
    <property type="entry name" value="OSCP"/>
    <property type="match status" value="1"/>
</dbReference>
<dbReference type="PRINTS" id="PR00125">
    <property type="entry name" value="ATPASEDELTA"/>
</dbReference>
<dbReference type="SUPFAM" id="SSF47928">
    <property type="entry name" value="N-terminal domain of the delta subunit of the F1F0-ATP synthase"/>
    <property type="match status" value="1"/>
</dbReference>
<accession>B5ZAW6</accession>
<name>ATPD_UREU1</name>
<organism>
    <name type="scientific">Ureaplasma urealyticum serovar 10 (strain ATCC 33699 / Western)</name>
    <dbReference type="NCBI Taxonomy" id="565575"/>
    <lineage>
        <taxon>Bacteria</taxon>
        <taxon>Bacillati</taxon>
        <taxon>Mycoplasmatota</taxon>
        <taxon>Mycoplasmoidales</taxon>
        <taxon>Mycoplasmoidaceae</taxon>
        <taxon>Ureaplasma</taxon>
    </lineage>
</organism>
<feature type="chain" id="PRO_0000371190" description="ATP synthase subunit delta">
    <location>
        <begin position="1"/>
        <end position="179"/>
    </location>
</feature>
<evidence type="ECO:0000255" key="1">
    <source>
        <dbReference type="HAMAP-Rule" id="MF_01416"/>
    </source>
</evidence>
<keyword id="KW-0066">ATP synthesis</keyword>
<keyword id="KW-1003">Cell membrane</keyword>
<keyword id="KW-0139">CF(1)</keyword>
<keyword id="KW-0375">Hydrogen ion transport</keyword>
<keyword id="KW-0406">Ion transport</keyword>
<keyword id="KW-0472">Membrane</keyword>
<keyword id="KW-0813">Transport</keyword>
<protein>
    <recommendedName>
        <fullName evidence="1">ATP synthase subunit delta</fullName>
    </recommendedName>
    <alternativeName>
        <fullName evidence="1">ATP synthase F(1) sector subunit delta</fullName>
    </alternativeName>
    <alternativeName>
        <fullName evidence="1">F-type ATPase subunit delta</fullName>
        <shortName evidence="1">F-ATPase subunit delta</shortName>
    </alternativeName>
</protein>
<comment type="function">
    <text evidence="1">F(1)F(0) ATP synthase produces ATP from ADP in the presence of a proton or sodium gradient. F-type ATPases consist of two structural domains, F(1) containing the extramembraneous catalytic core and F(0) containing the membrane proton channel, linked together by a central stalk and a peripheral stalk. During catalysis, ATP synthesis in the catalytic domain of F(1) is coupled via a rotary mechanism of the central stalk subunits to proton translocation.</text>
</comment>
<comment type="function">
    <text evidence="1">This protein is part of the stalk that links CF(0) to CF(1). It either transmits conformational changes from CF(0) to CF(1) or is implicated in proton conduction.</text>
</comment>
<comment type="subunit">
    <text evidence="1">F-type ATPases have 2 components, F(1) - the catalytic core - and F(0) - the membrane proton channel. F(1) has five subunits: alpha(3), beta(3), gamma(1), delta(1), epsilon(1). F(0) has three main subunits: a(1), b(2) and c(10-14). The alpha and beta chains form an alternating ring which encloses part of the gamma chain. F(1) is attached to F(0) by a central stalk formed by the gamma and epsilon chains, while a peripheral stalk is formed by the delta and b chains.</text>
</comment>
<comment type="subcellular location">
    <subcellularLocation>
        <location evidence="1">Cell membrane</location>
        <topology evidence="1">Peripheral membrane protein</topology>
    </subcellularLocation>
</comment>
<comment type="similarity">
    <text evidence="1">Belongs to the ATPase delta chain family.</text>
</comment>
<gene>
    <name evidence="1" type="primary">atpH</name>
    <name type="ordered locus">UUR10_0149</name>
</gene>
<sequence length="179" mass="20439">MKSSLKPVEKYAYSIFEIAKEEKKLDLYKHNLETINSIIEEVPAFFEAVGDPARDRNERKQIVIKNLEGEIDIYLISLIDLLIDVKSIKLLKKIVLKALDFVNEALSVKKVLITTAYELTKNQIDRLVQSLKKKYACEKIEPIVVVDKSIIGGLSINFESQVLDNSLKTKLFNVVKKTN</sequence>